<organism>
    <name type="scientific">Streptococcus pyogenes serotype M6 (strain ATCC BAA-946 / MGAS10394)</name>
    <dbReference type="NCBI Taxonomy" id="286636"/>
    <lineage>
        <taxon>Bacteria</taxon>
        <taxon>Bacillati</taxon>
        <taxon>Bacillota</taxon>
        <taxon>Bacilli</taxon>
        <taxon>Lactobacillales</taxon>
        <taxon>Streptococcaceae</taxon>
        <taxon>Streptococcus</taxon>
    </lineage>
</organism>
<accession>Q5XAL6</accession>
<protein>
    <recommendedName>
        <fullName evidence="1">Phospho-N-acetylmuramoyl-pentapeptide-transferase</fullName>
        <ecNumber evidence="1">2.7.8.13</ecNumber>
    </recommendedName>
    <alternativeName>
        <fullName evidence="1">UDP-MurNAc-pentapeptide phosphotransferase</fullName>
    </alternativeName>
</protein>
<comment type="function">
    <text evidence="1">Catalyzes the initial step of the lipid cycle reactions in the biosynthesis of the cell wall peptidoglycan: transfers peptidoglycan precursor phospho-MurNAc-pentapeptide from UDP-MurNAc-pentapeptide onto the lipid carrier undecaprenyl phosphate, yielding undecaprenyl-pyrophosphoryl-MurNAc-pentapeptide, known as lipid I.</text>
</comment>
<comment type="catalytic activity">
    <reaction evidence="1">
        <text>UDP-N-acetyl-alpha-D-muramoyl-L-alanyl-gamma-D-glutamyl-L-lysyl-D-alanyl-D-alanine + di-trans,octa-cis-undecaprenyl phosphate = Mur2Ac(oyl-L-Ala-gamma-D-Glu-L-Lys-D-Ala-D-Ala)-di-trans,octa-cis-undecaprenyl diphosphate + UMP</text>
        <dbReference type="Rhea" id="RHEA:21920"/>
        <dbReference type="ChEBI" id="CHEBI:57865"/>
        <dbReference type="ChEBI" id="CHEBI:60032"/>
        <dbReference type="ChEBI" id="CHEBI:60392"/>
        <dbReference type="ChEBI" id="CHEBI:70758"/>
        <dbReference type="EC" id="2.7.8.13"/>
    </reaction>
</comment>
<comment type="cofactor">
    <cofactor evidence="1">
        <name>Mg(2+)</name>
        <dbReference type="ChEBI" id="CHEBI:18420"/>
    </cofactor>
</comment>
<comment type="pathway">
    <text evidence="1">Cell wall biogenesis; peptidoglycan biosynthesis.</text>
</comment>
<comment type="subcellular location">
    <subcellularLocation>
        <location evidence="1">Cell membrane</location>
        <topology evidence="1">Multi-pass membrane protein</topology>
    </subcellularLocation>
</comment>
<comment type="similarity">
    <text evidence="1">Belongs to the glycosyltransferase 4 family. MraY subfamily.</text>
</comment>
<gene>
    <name evidence="1" type="primary">mraY</name>
    <name type="ordered locus">M6_Spy1412</name>
</gene>
<proteinExistence type="inferred from homology"/>
<keyword id="KW-0131">Cell cycle</keyword>
<keyword id="KW-0132">Cell division</keyword>
<keyword id="KW-1003">Cell membrane</keyword>
<keyword id="KW-0133">Cell shape</keyword>
<keyword id="KW-0961">Cell wall biogenesis/degradation</keyword>
<keyword id="KW-0460">Magnesium</keyword>
<keyword id="KW-0472">Membrane</keyword>
<keyword id="KW-0479">Metal-binding</keyword>
<keyword id="KW-0573">Peptidoglycan synthesis</keyword>
<keyword id="KW-0808">Transferase</keyword>
<keyword id="KW-0812">Transmembrane</keyword>
<keyword id="KW-1133">Transmembrane helix</keyword>
<name>MRAY_STRP6</name>
<dbReference type="EC" id="2.7.8.13" evidence="1"/>
<dbReference type="EMBL" id="CP000003">
    <property type="protein sequence ID" value="AAT87547.1"/>
    <property type="molecule type" value="Genomic_DNA"/>
</dbReference>
<dbReference type="RefSeq" id="WP_011184836.1">
    <property type="nucleotide sequence ID" value="NC_006086.1"/>
</dbReference>
<dbReference type="SMR" id="Q5XAL6"/>
<dbReference type="GeneID" id="69900472"/>
<dbReference type="KEGG" id="spa:M6_Spy1412"/>
<dbReference type="HOGENOM" id="CLU_023982_0_1_9"/>
<dbReference type="UniPathway" id="UPA00219"/>
<dbReference type="Proteomes" id="UP000001167">
    <property type="component" value="Chromosome"/>
</dbReference>
<dbReference type="GO" id="GO:0005886">
    <property type="term" value="C:plasma membrane"/>
    <property type="evidence" value="ECO:0007669"/>
    <property type="project" value="UniProtKB-SubCell"/>
</dbReference>
<dbReference type="GO" id="GO:0046872">
    <property type="term" value="F:metal ion binding"/>
    <property type="evidence" value="ECO:0007669"/>
    <property type="project" value="UniProtKB-KW"/>
</dbReference>
<dbReference type="GO" id="GO:0008963">
    <property type="term" value="F:phospho-N-acetylmuramoyl-pentapeptide-transferase activity"/>
    <property type="evidence" value="ECO:0007669"/>
    <property type="project" value="UniProtKB-UniRule"/>
</dbReference>
<dbReference type="GO" id="GO:0051301">
    <property type="term" value="P:cell division"/>
    <property type="evidence" value="ECO:0007669"/>
    <property type="project" value="UniProtKB-KW"/>
</dbReference>
<dbReference type="GO" id="GO:0071555">
    <property type="term" value="P:cell wall organization"/>
    <property type="evidence" value="ECO:0007669"/>
    <property type="project" value="UniProtKB-KW"/>
</dbReference>
<dbReference type="GO" id="GO:0009252">
    <property type="term" value="P:peptidoglycan biosynthetic process"/>
    <property type="evidence" value="ECO:0007669"/>
    <property type="project" value="UniProtKB-UniRule"/>
</dbReference>
<dbReference type="GO" id="GO:0008360">
    <property type="term" value="P:regulation of cell shape"/>
    <property type="evidence" value="ECO:0007669"/>
    <property type="project" value="UniProtKB-KW"/>
</dbReference>
<dbReference type="CDD" id="cd06852">
    <property type="entry name" value="GT_MraY"/>
    <property type="match status" value="1"/>
</dbReference>
<dbReference type="HAMAP" id="MF_00038">
    <property type="entry name" value="MraY"/>
    <property type="match status" value="1"/>
</dbReference>
<dbReference type="InterPro" id="IPR000715">
    <property type="entry name" value="Glycosyl_transferase_4"/>
</dbReference>
<dbReference type="InterPro" id="IPR003524">
    <property type="entry name" value="PNAcMuramoyl-5peptid_Trfase"/>
</dbReference>
<dbReference type="InterPro" id="IPR018480">
    <property type="entry name" value="PNAcMuramoyl-5peptid_Trfase_CS"/>
</dbReference>
<dbReference type="NCBIfam" id="TIGR00445">
    <property type="entry name" value="mraY"/>
    <property type="match status" value="1"/>
</dbReference>
<dbReference type="PANTHER" id="PTHR22926">
    <property type="entry name" value="PHOSPHO-N-ACETYLMURAMOYL-PENTAPEPTIDE-TRANSFERASE"/>
    <property type="match status" value="1"/>
</dbReference>
<dbReference type="PANTHER" id="PTHR22926:SF5">
    <property type="entry name" value="PHOSPHO-N-ACETYLMURAMOYL-PENTAPEPTIDE-TRANSFERASE HOMOLOG"/>
    <property type="match status" value="1"/>
</dbReference>
<dbReference type="Pfam" id="PF00953">
    <property type="entry name" value="Glycos_transf_4"/>
    <property type="match status" value="1"/>
</dbReference>
<dbReference type="Pfam" id="PF10555">
    <property type="entry name" value="MraY_sig1"/>
    <property type="match status" value="1"/>
</dbReference>
<dbReference type="PROSITE" id="PS01348">
    <property type="entry name" value="MRAY_2"/>
    <property type="match status" value="1"/>
</dbReference>
<evidence type="ECO:0000255" key="1">
    <source>
        <dbReference type="HAMAP-Rule" id="MF_00038"/>
    </source>
</evidence>
<reference key="1">
    <citation type="journal article" date="2004" name="J. Infect. Dis.">
        <title>Progress toward characterization of the group A Streptococcus metagenome: complete genome sequence of a macrolide-resistant serotype M6 strain.</title>
        <authorList>
            <person name="Banks D.J."/>
            <person name="Porcella S.F."/>
            <person name="Barbian K.D."/>
            <person name="Beres S.B."/>
            <person name="Philips L.E."/>
            <person name="Voyich J.M."/>
            <person name="DeLeo F.R."/>
            <person name="Martin J.M."/>
            <person name="Somerville G.A."/>
            <person name="Musser J.M."/>
        </authorList>
    </citation>
    <scope>NUCLEOTIDE SEQUENCE [LARGE SCALE GENOMIC DNA]</scope>
    <source>
        <strain>ATCC BAA-946 / MGAS10394</strain>
    </source>
</reference>
<sequence>MFLTLIAAIISFMVSAFTMPYFIKFYQLKKIGGQQMHEDVKQHLAKAGTPTMGGTVFLLVATAVSLLVSLFSIKNTQSLALISGILSIVVIYGIIGFLDDFLKIFKQINEGLTAKQKLALQLAGGLMFYFLHVSPSGISSINVFGYQLSLGIFYLFFVLFWVVGFSNAVNLTDGIDGLASISVVISLVTYGVIAYVQGQFDVLLLIGTMIGALLGFFLFNHKPAKVFMGDVGSLALGAMLAAISIALRQEWTLLIIGIVYVLETSSVMLQVSYFKYTKKKYGEGRRIFRMTPFHHHLELGGLSGKGKKWSEWQVDAFLWGVGSLASLLVLAILYVF</sequence>
<feature type="chain" id="PRO_0000108908" description="Phospho-N-acetylmuramoyl-pentapeptide-transferase">
    <location>
        <begin position="1"/>
        <end position="336"/>
    </location>
</feature>
<feature type="transmembrane region" description="Helical" evidence="1">
    <location>
        <begin position="3"/>
        <end position="23"/>
    </location>
</feature>
<feature type="transmembrane region" description="Helical" evidence="1">
    <location>
        <begin position="53"/>
        <end position="73"/>
    </location>
</feature>
<feature type="transmembrane region" description="Helical" evidence="1">
    <location>
        <begin position="78"/>
        <end position="98"/>
    </location>
</feature>
<feature type="transmembrane region" description="Helical" evidence="1">
    <location>
        <begin position="118"/>
        <end position="138"/>
    </location>
</feature>
<feature type="transmembrane region" description="Helical" evidence="1">
    <location>
        <begin position="143"/>
        <end position="163"/>
    </location>
</feature>
<feature type="transmembrane region" description="Helical" evidence="1">
    <location>
        <begin position="174"/>
        <end position="194"/>
    </location>
</feature>
<feature type="transmembrane region" description="Helical" evidence="1">
    <location>
        <begin position="200"/>
        <end position="220"/>
    </location>
</feature>
<feature type="transmembrane region" description="Helical" evidence="1">
    <location>
        <begin position="226"/>
        <end position="246"/>
    </location>
</feature>
<feature type="transmembrane region" description="Helical" evidence="1">
    <location>
        <begin position="251"/>
        <end position="271"/>
    </location>
</feature>
<feature type="transmembrane region" description="Helical" evidence="1">
    <location>
        <begin position="316"/>
        <end position="336"/>
    </location>
</feature>